<accession>A4QCK4</accession>
<organism>
    <name type="scientific">Corynebacterium glutamicum (strain R)</name>
    <dbReference type="NCBI Taxonomy" id="340322"/>
    <lineage>
        <taxon>Bacteria</taxon>
        <taxon>Bacillati</taxon>
        <taxon>Actinomycetota</taxon>
        <taxon>Actinomycetes</taxon>
        <taxon>Mycobacteriales</taxon>
        <taxon>Corynebacteriaceae</taxon>
        <taxon>Corynebacterium</taxon>
    </lineage>
</organism>
<sequence length="520" mass="55772">MSDDRKAIKRALISVYDKTGLEDLAQALHRENVEIVSTGSTAAKIAELGIPVTPVEELTGFPECLEGRVKTLHPKVHAGILADTRKEDHLRQLKELEVAPFQLVVVNLYPFAETVASGADFDACVEQIDIGGPSMVRAAAKNHPSVAVVVSPNRYEDVQEALKTGGFSRAERTKLAAEAFRHTATYDVTVATWMSEQLAAEDSETEFPGWIGTTNTLSRSLRYGENPHQSAALYVGNIRGLAQAKQFHGKEMSYNNYTDSDAAWRAAWDHERPCVAIIKHANPCGIAVSDESIAAAHREAHACDSVSAFGGVIASNREVSVEMANQVAEIFTEVIIAPSYEEGAVEILSQKKNIRILQAEAPVRKGFESREISGGLLVQERDLIHAEGDNSANWTLAAGSAVSPEVLKDLEFAWTAVRSVKSNAILLAKNGATVGVGMGQVNRVDSARLAVDRAGAERATGSVAASDAFFPFADGFEVLAEAGITAVVQPGGSIRDNEVIEAANKAGVTMYLTGARHFAH</sequence>
<gene>
    <name evidence="1" type="primary">purH</name>
    <name type="ordered locus">cgR_0976</name>
</gene>
<evidence type="ECO:0000255" key="1">
    <source>
        <dbReference type="HAMAP-Rule" id="MF_00139"/>
    </source>
</evidence>
<evidence type="ECO:0000255" key="2">
    <source>
        <dbReference type="PROSITE-ProRule" id="PRU01202"/>
    </source>
</evidence>
<keyword id="KW-0378">Hydrolase</keyword>
<keyword id="KW-0511">Multifunctional enzyme</keyword>
<keyword id="KW-0658">Purine biosynthesis</keyword>
<keyword id="KW-0808">Transferase</keyword>
<dbReference type="EC" id="2.1.2.3" evidence="1"/>
<dbReference type="EC" id="3.5.4.10" evidence="1"/>
<dbReference type="EMBL" id="AP009044">
    <property type="protein sequence ID" value="BAF53951.1"/>
    <property type="molecule type" value="Genomic_DNA"/>
</dbReference>
<dbReference type="RefSeq" id="WP_003858392.1">
    <property type="nucleotide sequence ID" value="NC_009342.1"/>
</dbReference>
<dbReference type="SMR" id="A4QCK4"/>
<dbReference type="KEGG" id="cgt:cgR_0976"/>
<dbReference type="HOGENOM" id="CLU_016316_5_2_11"/>
<dbReference type="PhylomeDB" id="A4QCK4"/>
<dbReference type="UniPathway" id="UPA00074">
    <property type="reaction ID" value="UER00133"/>
</dbReference>
<dbReference type="UniPathway" id="UPA00074">
    <property type="reaction ID" value="UER00135"/>
</dbReference>
<dbReference type="Proteomes" id="UP000006698">
    <property type="component" value="Chromosome"/>
</dbReference>
<dbReference type="GO" id="GO:0005829">
    <property type="term" value="C:cytosol"/>
    <property type="evidence" value="ECO:0007669"/>
    <property type="project" value="TreeGrafter"/>
</dbReference>
<dbReference type="GO" id="GO:0003937">
    <property type="term" value="F:IMP cyclohydrolase activity"/>
    <property type="evidence" value="ECO:0007669"/>
    <property type="project" value="UniProtKB-UniRule"/>
</dbReference>
<dbReference type="GO" id="GO:0004643">
    <property type="term" value="F:phosphoribosylaminoimidazolecarboxamide formyltransferase activity"/>
    <property type="evidence" value="ECO:0007669"/>
    <property type="project" value="UniProtKB-UniRule"/>
</dbReference>
<dbReference type="GO" id="GO:0006189">
    <property type="term" value="P:'de novo' IMP biosynthetic process"/>
    <property type="evidence" value="ECO:0007669"/>
    <property type="project" value="UniProtKB-UniRule"/>
</dbReference>
<dbReference type="CDD" id="cd01421">
    <property type="entry name" value="IMPCH"/>
    <property type="match status" value="1"/>
</dbReference>
<dbReference type="FunFam" id="3.40.140.20:FF:000001">
    <property type="entry name" value="Bifunctional purine biosynthesis protein PurH"/>
    <property type="match status" value="1"/>
</dbReference>
<dbReference type="FunFam" id="3.40.50.1380:FF:000001">
    <property type="entry name" value="Bifunctional purine biosynthesis protein PurH"/>
    <property type="match status" value="1"/>
</dbReference>
<dbReference type="Gene3D" id="3.40.140.20">
    <property type="match status" value="2"/>
</dbReference>
<dbReference type="Gene3D" id="3.40.50.1380">
    <property type="entry name" value="Methylglyoxal synthase-like domain"/>
    <property type="match status" value="1"/>
</dbReference>
<dbReference type="HAMAP" id="MF_00139">
    <property type="entry name" value="PurH"/>
    <property type="match status" value="1"/>
</dbReference>
<dbReference type="InterPro" id="IPR024051">
    <property type="entry name" value="AICAR_Tfase_dup_dom_sf"/>
</dbReference>
<dbReference type="InterPro" id="IPR016193">
    <property type="entry name" value="Cytidine_deaminase-like"/>
</dbReference>
<dbReference type="InterPro" id="IPR011607">
    <property type="entry name" value="MGS-like_dom"/>
</dbReference>
<dbReference type="InterPro" id="IPR036914">
    <property type="entry name" value="MGS-like_dom_sf"/>
</dbReference>
<dbReference type="InterPro" id="IPR002695">
    <property type="entry name" value="PurH-like"/>
</dbReference>
<dbReference type="NCBIfam" id="NF002049">
    <property type="entry name" value="PRK00881.1"/>
    <property type="match status" value="1"/>
</dbReference>
<dbReference type="NCBIfam" id="TIGR00355">
    <property type="entry name" value="purH"/>
    <property type="match status" value="1"/>
</dbReference>
<dbReference type="PANTHER" id="PTHR11692:SF0">
    <property type="entry name" value="BIFUNCTIONAL PURINE BIOSYNTHESIS PROTEIN ATIC"/>
    <property type="match status" value="1"/>
</dbReference>
<dbReference type="PANTHER" id="PTHR11692">
    <property type="entry name" value="BIFUNCTIONAL PURINE BIOSYNTHESIS PROTEIN PURH"/>
    <property type="match status" value="1"/>
</dbReference>
<dbReference type="Pfam" id="PF01808">
    <property type="entry name" value="AICARFT_IMPCHas"/>
    <property type="match status" value="1"/>
</dbReference>
<dbReference type="Pfam" id="PF02142">
    <property type="entry name" value="MGS"/>
    <property type="match status" value="1"/>
</dbReference>
<dbReference type="PIRSF" id="PIRSF000414">
    <property type="entry name" value="AICARFT_IMPCHas"/>
    <property type="match status" value="1"/>
</dbReference>
<dbReference type="SMART" id="SM00798">
    <property type="entry name" value="AICARFT_IMPCHas"/>
    <property type="match status" value="1"/>
</dbReference>
<dbReference type="SMART" id="SM00851">
    <property type="entry name" value="MGS"/>
    <property type="match status" value="1"/>
</dbReference>
<dbReference type="SUPFAM" id="SSF53927">
    <property type="entry name" value="Cytidine deaminase-like"/>
    <property type="match status" value="1"/>
</dbReference>
<dbReference type="SUPFAM" id="SSF52335">
    <property type="entry name" value="Methylglyoxal synthase-like"/>
    <property type="match status" value="1"/>
</dbReference>
<dbReference type="PROSITE" id="PS51855">
    <property type="entry name" value="MGS"/>
    <property type="match status" value="1"/>
</dbReference>
<name>PUR9_CORGB</name>
<proteinExistence type="inferred from homology"/>
<comment type="catalytic activity">
    <reaction evidence="1">
        <text>(6R)-10-formyltetrahydrofolate + 5-amino-1-(5-phospho-beta-D-ribosyl)imidazole-4-carboxamide = 5-formamido-1-(5-phospho-D-ribosyl)imidazole-4-carboxamide + (6S)-5,6,7,8-tetrahydrofolate</text>
        <dbReference type="Rhea" id="RHEA:22192"/>
        <dbReference type="ChEBI" id="CHEBI:57453"/>
        <dbReference type="ChEBI" id="CHEBI:58467"/>
        <dbReference type="ChEBI" id="CHEBI:58475"/>
        <dbReference type="ChEBI" id="CHEBI:195366"/>
        <dbReference type="EC" id="2.1.2.3"/>
    </reaction>
</comment>
<comment type="catalytic activity">
    <reaction evidence="1">
        <text>IMP + H2O = 5-formamido-1-(5-phospho-D-ribosyl)imidazole-4-carboxamide</text>
        <dbReference type="Rhea" id="RHEA:18445"/>
        <dbReference type="ChEBI" id="CHEBI:15377"/>
        <dbReference type="ChEBI" id="CHEBI:58053"/>
        <dbReference type="ChEBI" id="CHEBI:58467"/>
        <dbReference type="EC" id="3.5.4.10"/>
    </reaction>
</comment>
<comment type="pathway">
    <text evidence="1">Purine metabolism; IMP biosynthesis via de novo pathway; 5-formamido-1-(5-phospho-D-ribosyl)imidazole-4-carboxamide from 5-amino-1-(5-phospho-D-ribosyl)imidazole-4-carboxamide (10-formyl THF route): step 1/1.</text>
</comment>
<comment type="pathway">
    <text evidence="1">Purine metabolism; IMP biosynthesis via de novo pathway; IMP from 5-formamido-1-(5-phospho-D-ribosyl)imidazole-4-carboxamide: step 1/1.</text>
</comment>
<comment type="domain">
    <text evidence="1">The IMP cyclohydrolase activity resides in the N-terminal region.</text>
</comment>
<comment type="similarity">
    <text evidence="1">Belongs to the PurH family.</text>
</comment>
<protein>
    <recommendedName>
        <fullName evidence="1">Bifunctional purine biosynthesis protein PurH</fullName>
    </recommendedName>
    <domain>
        <recommendedName>
            <fullName evidence="1">Phosphoribosylaminoimidazolecarboxamide formyltransferase</fullName>
            <ecNumber evidence="1">2.1.2.3</ecNumber>
        </recommendedName>
        <alternativeName>
            <fullName evidence="1">AICAR transformylase</fullName>
        </alternativeName>
    </domain>
    <domain>
        <recommendedName>
            <fullName evidence="1">IMP cyclohydrolase</fullName>
            <ecNumber evidence="1">3.5.4.10</ecNumber>
        </recommendedName>
        <alternativeName>
            <fullName evidence="1">ATIC</fullName>
        </alternativeName>
        <alternativeName>
            <fullName evidence="1">IMP synthase</fullName>
        </alternativeName>
        <alternativeName>
            <fullName evidence="1">Inosinicase</fullName>
        </alternativeName>
    </domain>
</protein>
<reference key="1">
    <citation type="journal article" date="2007" name="Microbiology">
        <title>Comparative analysis of the Corynebacterium glutamicum group and complete genome sequence of strain R.</title>
        <authorList>
            <person name="Yukawa H."/>
            <person name="Omumasaba C.A."/>
            <person name="Nonaka H."/>
            <person name="Kos P."/>
            <person name="Okai N."/>
            <person name="Suzuki N."/>
            <person name="Suda M."/>
            <person name="Tsuge Y."/>
            <person name="Watanabe J."/>
            <person name="Ikeda Y."/>
            <person name="Vertes A.A."/>
            <person name="Inui M."/>
        </authorList>
    </citation>
    <scope>NUCLEOTIDE SEQUENCE [LARGE SCALE GENOMIC DNA]</scope>
    <source>
        <strain>R</strain>
    </source>
</reference>
<feature type="chain" id="PRO_1000096058" description="Bifunctional purine biosynthesis protein PurH">
    <location>
        <begin position="1"/>
        <end position="520"/>
    </location>
</feature>
<feature type="domain" description="MGS-like" evidence="2">
    <location>
        <begin position="1"/>
        <end position="150"/>
    </location>
</feature>